<keyword id="KW-0007">Acetylation</keyword>
<keyword id="KW-0903">Direct protein sequencing</keyword>
<keyword id="KW-0496">Mitochondrion</keyword>
<keyword id="KW-1185">Reference proteome</keyword>
<keyword id="KW-0687">Ribonucleoprotein</keyword>
<keyword id="KW-0689">Ribosomal protein</keyword>
<keyword id="KW-0809">Transit peptide</keyword>
<gene>
    <name type="primary">Mrps26</name>
</gene>
<protein>
    <recommendedName>
        <fullName evidence="4">Small ribosomal subunit protein mS26</fullName>
    </recommendedName>
    <alternativeName>
        <fullName>28S ribosomal protein S26, mitochondrial</fullName>
        <shortName>MRP-S26</shortName>
        <shortName>S26mt</shortName>
    </alternativeName>
    <alternativeName>
        <fullName>Protein 5'OT-EST</fullName>
    </alternativeName>
</protein>
<comment type="subunit">
    <text evidence="1">Component of the mitochondrial ribosome small subunit (28S) which comprises a 12S rRNA and about 30 distinct proteins.</text>
</comment>
<comment type="subcellular location">
    <subcellularLocation>
        <location evidence="1">Mitochondrion</location>
    </subcellularLocation>
</comment>
<comment type="similarity">
    <text evidence="4">Belongs to the mitochondrion-specific ribosomal protein mS26 family.</text>
</comment>
<name>RT26_RAT</name>
<proteinExistence type="evidence at protein level"/>
<evidence type="ECO:0000250" key="1">
    <source>
        <dbReference type="UniProtKB" id="Q3SZ86"/>
    </source>
</evidence>
<evidence type="ECO:0000250" key="2">
    <source>
        <dbReference type="UniProtKB" id="Q80ZS3"/>
    </source>
</evidence>
<evidence type="ECO:0000269" key="3">
    <source>
    </source>
</evidence>
<evidence type="ECO:0000305" key="4"/>
<feature type="transit peptide" description="Mitochondrion" evidence="3">
    <location>
        <begin position="1"/>
        <end position="27"/>
    </location>
</feature>
<feature type="chain" id="PRO_0000030592" description="Small ribosomal subunit protein mS26">
    <location>
        <begin position="28"/>
        <end position="200"/>
    </location>
</feature>
<feature type="modified residue" description="N6-acetyllysine" evidence="2">
    <location>
        <position position="159"/>
    </location>
</feature>
<feature type="sequence conflict" description="In Ref. 2; AA sequence." evidence="4" ref="2">
    <original>P</original>
    <variation>D</variation>
    <location>
        <position position="34"/>
    </location>
</feature>
<feature type="sequence conflict" description="In Ref. 2; AA sequence." evidence="4" ref="2">
    <original>S</original>
    <variation>K</variation>
    <location>
        <position position="37"/>
    </location>
</feature>
<accession>Q9EPJ3</accession>
<organism>
    <name type="scientific">Rattus norvegicus</name>
    <name type="common">Rat</name>
    <dbReference type="NCBI Taxonomy" id="10116"/>
    <lineage>
        <taxon>Eukaryota</taxon>
        <taxon>Metazoa</taxon>
        <taxon>Chordata</taxon>
        <taxon>Craniata</taxon>
        <taxon>Vertebrata</taxon>
        <taxon>Euteleostomi</taxon>
        <taxon>Mammalia</taxon>
        <taxon>Eutheria</taxon>
        <taxon>Euarchontoglires</taxon>
        <taxon>Glires</taxon>
        <taxon>Rodentia</taxon>
        <taxon>Myomorpha</taxon>
        <taxon>Muroidea</taxon>
        <taxon>Muridae</taxon>
        <taxon>Murinae</taxon>
        <taxon>Rattus</taxon>
    </lineage>
</organism>
<sequence>MLRALNRLAARPGGQPPTLLLLPVRGRKTRHDPPAKSKVGRVKMPPAVDPAELFVLTERYRQYRETVRALRREFTLEVRGKLHEARAGVLAERKAQEAIREHQELMAWNREENRRLQELRIARLQLEAQAQELRQAEVQAQRAQEEQAWVQLKEQEVLKLQEEAKNFITRENLEARIEEALDSPKSYNWAVTKEGQVVRN</sequence>
<dbReference type="EMBL" id="AJ131196">
    <property type="protein sequence ID" value="CAC20860.1"/>
    <property type="molecule type" value="Genomic_DNA"/>
</dbReference>
<dbReference type="RefSeq" id="NP_001013224.1">
    <property type="nucleotide sequence ID" value="NM_001013206.2"/>
</dbReference>
<dbReference type="SMR" id="Q9EPJ3"/>
<dbReference type="FunCoup" id="Q9EPJ3">
    <property type="interactions" value="1146"/>
</dbReference>
<dbReference type="IntAct" id="Q9EPJ3">
    <property type="interactions" value="2"/>
</dbReference>
<dbReference type="STRING" id="10116.ENSRNOP00000028828"/>
<dbReference type="iPTMnet" id="Q9EPJ3"/>
<dbReference type="PhosphoSitePlus" id="Q9EPJ3"/>
<dbReference type="PaxDb" id="10116-ENSRNOP00000028828"/>
<dbReference type="GeneID" id="362216"/>
<dbReference type="KEGG" id="rno:362216"/>
<dbReference type="UCSC" id="RGD:1308733">
    <property type="organism name" value="rat"/>
</dbReference>
<dbReference type="AGR" id="RGD:1308733"/>
<dbReference type="CTD" id="64949"/>
<dbReference type="RGD" id="1308733">
    <property type="gene designation" value="Mrps26"/>
</dbReference>
<dbReference type="VEuPathDB" id="HostDB:ENSRNOG00000021224"/>
<dbReference type="eggNOG" id="KOG4691">
    <property type="taxonomic scope" value="Eukaryota"/>
</dbReference>
<dbReference type="HOGENOM" id="CLU_104778_0_0_1"/>
<dbReference type="InParanoid" id="Q9EPJ3"/>
<dbReference type="OrthoDB" id="87398at9989"/>
<dbReference type="PhylomeDB" id="Q9EPJ3"/>
<dbReference type="TreeFam" id="TF316309"/>
<dbReference type="Reactome" id="R-RNO-5389840">
    <property type="pathway name" value="Mitochondrial translation elongation"/>
</dbReference>
<dbReference type="Reactome" id="R-RNO-5419276">
    <property type="pathway name" value="Mitochondrial translation termination"/>
</dbReference>
<dbReference type="PRO" id="PR:Q9EPJ3"/>
<dbReference type="Proteomes" id="UP000002494">
    <property type="component" value="Chromosome 3"/>
</dbReference>
<dbReference type="Bgee" id="ENSRNOG00000021224">
    <property type="expression patterns" value="Expressed in thymus and 20 other cell types or tissues"/>
</dbReference>
<dbReference type="GO" id="GO:0005763">
    <property type="term" value="C:mitochondrial small ribosomal subunit"/>
    <property type="evidence" value="ECO:0000250"/>
    <property type="project" value="UniProtKB"/>
</dbReference>
<dbReference type="InterPro" id="IPR026140">
    <property type="entry name" value="Ribosomal_mS26"/>
</dbReference>
<dbReference type="PANTHER" id="PTHR21035">
    <property type="entry name" value="28S RIBOSOMAL PROTEIN S26, MITOCHONDRIAL"/>
    <property type="match status" value="1"/>
</dbReference>
<dbReference type="PANTHER" id="PTHR21035:SF2">
    <property type="entry name" value="SMALL RIBOSOMAL SUBUNIT PROTEIN MS26"/>
    <property type="match status" value="1"/>
</dbReference>
<dbReference type="Pfam" id="PF14943">
    <property type="entry name" value="MRP-S26"/>
    <property type="match status" value="1"/>
</dbReference>
<reference key="1">
    <citation type="submission" date="1998-12" db="EMBL/GenBank/DDBJ databases">
        <authorList>
            <person name="Wells S.E."/>
            <person name="Flavell D.M."/>
            <person name="Le Tissier P.R."/>
            <person name="Bains R."/>
            <person name="Bennett P."/>
            <person name="Stoye J.P."/>
            <person name="Robinson I.C.A."/>
        </authorList>
    </citation>
    <scope>NUCLEOTIDE SEQUENCE [GENOMIC DNA]</scope>
</reference>
<reference key="2">
    <citation type="journal article" date="1998" name="J. Biol. Chem.">
        <title>Mammalian mitochondrial ribosomal proteins. N-terminal amino acid sequencing, characterization, and identification of corresponding gene sequences.</title>
        <authorList>
            <person name="Goldschmidt-Reisin S."/>
            <person name="Kitakawa M."/>
            <person name="Herfurth E."/>
            <person name="Wittmann-Liebold B."/>
            <person name="Grohmann L."/>
            <person name="Graack H.-R."/>
        </authorList>
    </citation>
    <scope>PROTEIN SEQUENCE OF 28-44</scope>
</reference>